<dbReference type="EMBL" id="CP000668">
    <property type="protein sequence ID" value="ABP39070.1"/>
    <property type="molecule type" value="Genomic_DNA"/>
</dbReference>
<dbReference type="RefSeq" id="WP_002215759.1">
    <property type="nucleotide sequence ID" value="NZ_CP009715.1"/>
</dbReference>
<dbReference type="SMR" id="A4TIF8"/>
<dbReference type="KEGG" id="ypp:YPDSF_0664"/>
<dbReference type="PATRIC" id="fig|386656.14.peg.1989"/>
<dbReference type="GO" id="GO:0009279">
    <property type="term" value="C:cell outer membrane"/>
    <property type="evidence" value="ECO:0007669"/>
    <property type="project" value="UniProtKB-SubCell"/>
</dbReference>
<dbReference type="GO" id="GO:0046930">
    <property type="term" value="C:pore complex"/>
    <property type="evidence" value="ECO:0007669"/>
    <property type="project" value="UniProtKB-KW"/>
</dbReference>
<dbReference type="GO" id="GO:0042958">
    <property type="term" value="F:maltodextrin transmembrane transporter activity"/>
    <property type="evidence" value="ECO:0007669"/>
    <property type="project" value="InterPro"/>
</dbReference>
<dbReference type="GO" id="GO:0015481">
    <property type="term" value="F:maltose transporting porin activity"/>
    <property type="evidence" value="ECO:0007669"/>
    <property type="project" value="InterPro"/>
</dbReference>
<dbReference type="GO" id="GO:0006811">
    <property type="term" value="P:monoatomic ion transport"/>
    <property type="evidence" value="ECO:0007669"/>
    <property type="project" value="UniProtKB-KW"/>
</dbReference>
<dbReference type="CDD" id="cd01346">
    <property type="entry name" value="Maltoporin-like"/>
    <property type="match status" value="1"/>
</dbReference>
<dbReference type="Gene3D" id="2.40.170.10">
    <property type="entry name" value="Porin, LamB type"/>
    <property type="match status" value="1"/>
</dbReference>
<dbReference type="HAMAP" id="MF_01301">
    <property type="entry name" value="LamB"/>
    <property type="match status" value="1"/>
</dbReference>
<dbReference type="InterPro" id="IPR050286">
    <property type="entry name" value="G_neg_Bact_CarbUptk_Porin"/>
</dbReference>
<dbReference type="InterPro" id="IPR023738">
    <property type="entry name" value="Maltoporin"/>
</dbReference>
<dbReference type="InterPro" id="IPR003192">
    <property type="entry name" value="Porin_LamB"/>
</dbReference>
<dbReference type="InterPro" id="IPR036998">
    <property type="entry name" value="Porin_LamB_sf"/>
</dbReference>
<dbReference type="NCBIfam" id="NF006860">
    <property type="entry name" value="PRK09360.1"/>
    <property type="match status" value="1"/>
</dbReference>
<dbReference type="NCBIfam" id="NF009061">
    <property type="entry name" value="PRK12395.1"/>
    <property type="match status" value="1"/>
</dbReference>
<dbReference type="PANTHER" id="PTHR38762">
    <property type="entry name" value="CRYPTIC OUTER MEMBRANE PORIN BGLH-RELATED"/>
    <property type="match status" value="1"/>
</dbReference>
<dbReference type="PANTHER" id="PTHR38762:SF1">
    <property type="entry name" value="CRYPTIC OUTER MEMBRANE PORIN BGLH-RELATED"/>
    <property type="match status" value="1"/>
</dbReference>
<dbReference type="Pfam" id="PF02264">
    <property type="entry name" value="LamB"/>
    <property type="match status" value="1"/>
</dbReference>
<dbReference type="SUPFAM" id="SSF56935">
    <property type="entry name" value="Porins"/>
    <property type="match status" value="1"/>
</dbReference>
<evidence type="ECO:0000255" key="1">
    <source>
        <dbReference type="HAMAP-Rule" id="MF_01301"/>
    </source>
</evidence>
<gene>
    <name evidence="1" type="primary">lamB2</name>
    <name type="ordered locus">YPDSF_0664</name>
</gene>
<feature type="signal peptide" evidence="1">
    <location>
        <begin position="1"/>
        <end position="23"/>
    </location>
</feature>
<feature type="chain" id="PRO_5000236589" description="Maltoporin 2">
    <location>
        <begin position="24"/>
        <end position="419"/>
    </location>
</feature>
<feature type="site" description="Greasy slide, important in sugar transport" evidence="1">
    <location>
        <position position="32"/>
    </location>
</feature>
<feature type="site" description="Greasy slide, important in sugar transport" evidence="1">
    <location>
        <position position="63"/>
    </location>
</feature>
<feature type="site" description="Greasy slide, important in sugar transport" evidence="1">
    <location>
        <position position="250"/>
    </location>
</feature>
<feature type="site" description="Greasy slide, important in sugar transport" evidence="1">
    <location>
        <position position="418"/>
    </location>
</feature>
<organism>
    <name type="scientific">Yersinia pestis (strain Pestoides F)</name>
    <dbReference type="NCBI Taxonomy" id="386656"/>
    <lineage>
        <taxon>Bacteria</taxon>
        <taxon>Pseudomonadati</taxon>
        <taxon>Pseudomonadota</taxon>
        <taxon>Gammaproteobacteria</taxon>
        <taxon>Enterobacterales</taxon>
        <taxon>Yersiniaceae</taxon>
        <taxon>Yersinia</taxon>
    </lineage>
</organism>
<proteinExistence type="inferred from homology"/>
<reference key="1">
    <citation type="submission" date="2007-02" db="EMBL/GenBank/DDBJ databases">
        <title>Complete sequence of chromosome of Yersinia pestis Pestoides F.</title>
        <authorList>
            <consortium name="US DOE Joint Genome Institute"/>
            <person name="Copeland A."/>
            <person name="Lucas S."/>
            <person name="Lapidus A."/>
            <person name="Barry K."/>
            <person name="Detter J.C."/>
            <person name="Glavina del Rio T."/>
            <person name="Hammon N."/>
            <person name="Israni S."/>
            <person name="Dalin E."/>
            <person name="Tice H."/>
            <person name="Pitluck S."/>
            <person name="Di Bartolo G."/>
            <person name="Chain P."/>
            <person name="Malfatti S."/>
            <person name="Shin M."/>
            <person name="Vergez L."/>
            <person name="Schmutz J."/>
            <person name="Larimer F."/>
            <person name="Land M."/>
            <person name="Hauser L."/>
            <person name="Worsham P."/>
            <person name="Chu M."/>
            <person name="Bearden S."/>
            <person name="Garcia E."/>
            <person name="Richardson P."/>
        </authorList>
    </citation>
    <scope>NUCLEOTIDE SEQUENCE [LARGE SCALE GENOMIC DNA]</scope>
    <source>
        <strain>Pestoides F</strain>
    </source>
</reference>
<sequence>MKTSLRTLSVALAAALVSPSVLAIEKIDFHGYMRAGVGVSSDGGLAEWQKTMVGRLGNESDTYGEIGLGAEVYKKEDVSFYLDSMVSMLSDGSNDSETTIGDDAQFGLRQLNLQIKGLIPGDKEAVIWGGKRYYQRHDLHIIDTKYWNISGSGAGIENYTVGPGAVSVAWVRGDANDVDTRITGDSDVNINYIDVRYAGFKPWAGSWTEVGIDYAMPNPTKQQKEYGGLYDADNAVMLTGEISQDMFGGYNKLVLQYANKGLAQNMISQGGGWYDMWHKTDEAKGYRVINTGLIPITDKFSFNHVLTWGSANDITEYTDKTNLISLVGRAQYQFTQYVRAIGEVGGFYQKDTYHNGSNYKQGGEKYTIALGLAEGPDFLSRPELRVFASYLNDSENGKPFEDGTSNDTWNFGVQVEAWW</sequence>
<comment type="function">
    <text evidence="1">Involved in the transport of maltose and maltodextrins.</text>
</comment>
<comment type="catalytic activity">
    <reaction evidence="1">
        <text>beta-maltose(in) = beta-maltose(out)</text>
        <dbReference type="Rhea" id="RHEA:29731"/>
        <dbReference type="ChEBI" id="CHEBI:18147"/>
    </reaction>
</comment>
<comment type="subunit">
    <text evidence="1">Homotrimer formed of three 18-stranded antiparallel beta-barrels, containing three independent channels.</text>
</comment>
<comment type="subcellular location">
    <subcellularLocation>
        <location evidence="1">Cell outer membrane</location>
        <topology evidence="1">Multi-pass membrane protein</topology>
    </subcellularLocation>
</comment>
<comment type="induction">
    <text evidence="1">By maltose.</text>
</comment>
<comment type="similarity">
    <text evidence="1">Belongs to the porin LamB (TC 1.B.3) family.</text>
</comment>
<name>LAMB2_YERPP</name>
<keyword id="KW-0998">Cell outer membrane</keyword>
<keyword id="KW-0406">Ion transport</keyword>
<keyword id="KW-0472">Membrane</keyword>
<keyword id="KW-0626">Porin</keyword>
<keyword id="KW-0732">Signal</keyword>
<keyword id="KW-0762">Sugar transport</keyword>
<keyword id="KW-0812">Transmembrane</keyword>
<keyword id="KW-1134">Transmembrane beta strand</keyword>
<keyword id="KW-0813">Transport</keyword>
<accession>A4TIF8</accession>
<protein>
    <recommendedName>
        <fullName evidence="1">Maltoporin 2</fullName>
    </recommendedName>
    <alternativeName>
        <fullName evidence="1">Maltose-inducible porin 2</fullName>
    </alternativeName>
</protein>